<feature type="chain" id="PRO_0000454668" description="Pseudouridine-5'-phosphate glycosidase">
    <location>
        <begin position="1"/>
        <end position="330"/>
    </location>
</feature>
<feature type="active site" description="Proton donor" evidence="1">
    <location>
        <position position="50"/>
    </location>
</feature>
<feature type="active site" description="Nucleophile" evidence="1">
    <location>
        <position position="185"/>
    </location>
</feature>
<feature type="binding site" evidence="1">
    <location>
        <position position="112"/>
    </location>
    <ligand>
        <name>substrate</name>
    </ligand>
</feature>
<feature type="binding site" evidence="1">
    <location>
        <position position="132"/>
    </location>
    <ligand>
        <name>substrate</name>
    </ligand>
</feature>
<feature type="binding site" evidence="1">
    <location>
        <position position="164"/>
    </location>
    <ligand>
        <name>Mn(2+)</name>
        <dbReference type="ChEBI" id="CHEBI:29035"/>
    </ligand>
</feature>
<feature type="binding site" evidence="1">
    <location>
        <begin position="166"/>
        <end position="168"/>
    </location>
    <ligand>
        <name>substrate</name>
    </ligand>
</feature>
<protein>
    <recommendedName>
        <fullName evidence="4">Pseudouridine-5'-phosphate glycosidase</fullName>
        <shortName evidence="4">PsiMP glycosidase</shortName>
        <ecNumber evidence="2">4.2.1.70</ecNumber>
    </recommendedName>
    <alternativeName>
        <fullName evidence="3">Pseudouridine monophosphate glycosidase</fullName>
    </alternativeName>
</protein>
<dbReference type="EC" id="4.2.1.70" evidence="2"/>
<dbReference type="EMBL" id="AC012561">
    <property type="protein sequence ID" value="AAF87879.1"/>
    <property type="status" value="ALT_SEQ"/>
    <property type="molecule type" value="Genomic_DNA"/>
</dbReference>
<dbReference type="EMBL" id="CP002684">
    <property type="protein sequence ID" value="AEE32559.1"/>
    <property type="molecule type" value="Genomic_DNA"/>
</dbReference>
<dbReference type="EMBL" id="BT002789">
    <property type="protein sequence ID" value="AAO22617.1"/>
    <property type="molecule type" value="mRNA"/>
</dbReference>
<dbReference type="EMBL" id="BT004358">
    <property type="protein sequence ID" value="AAO42352.1"/>
    <property type="molecule type" value="mRNA"/>
</dbReference>
<dbReference type="RefSeq" id="NP_564574.2">
    <property type="nucleotide sequence ID" value="NM_103934.5"/>
</dbReference>
<dbReference type="PDB" id="8K05">
    <property type="method" value="X-ray"/>
    <property type="resolution" value="1.45 A"/>
    <property type="chains" value="A=1-330"/>
</dbReference>
<dbReference type="PDB" id="8K06">
    <property type="method" value="X-ray"/>
    <property type="resolution" value="1.84 A"/>
    <property type="chains" value="A/B/C=1-330"/>
</dbReference>
<dbReference type="PDB" id="8K07">
    <property type="method" value="X-ray"/>
    <property type="resolution" value="1.12 A"/>
    <property type="chains" value="A/B/C=1-330"/>
</dbReference>
<dbReference type="PDBsum" id="8K05"/>
<dbReference type="PDBsum" id="8K06"/>
<dbReference type="PDBsum" id="8K07"/>
<dbReference type="SMR" id="Q84K35"/>
<dbReference type="FunCoup" id="Q84K35">
    <property type="interactions" value="707"/>
</dbReference>
<dbReference type="STRING" id="3702.Q84K35"/>
<dbReference type="PaxDb" id="3702-AT1G50510.1"/>
<dbReference type="ProteomicsDB" id="180881"/>
<dbReference type="EnsemblPlants" id="AT1G50510.1">
    <property type="protein sequence ID" value="AT1G50510.1"/>
    <property type="gene ID" value="AT1G50510"/>
</dbReference>
<dbReference type="GeneID" id="841473"/>
<dbReference type="Gramene" id="AT1G50510.1">
    <property type="protein sequence ID" value="AT1G50510.1"/>
    <property type="gene ID" value="AT1G50510"/>
</dbReference>
<dbReference type="KEGG" id="ath:AT1G50510"/>
<dbReference type="Araport" id="AT1G50510"/>
<dbReference type="TAIR" id="AT1G50510">
    <property type="gene designation" value="PUMY"/>
</dbReference>
<dbReference type="eggNOG" id="KOG3009">
    <property type="taxonomic scope" value="Eukaryota"/>
</dbReference>
<dbReference type="HOGENOM" id="CLU_012201_0_1_1"/>
<dbReference type="InParanoid" id="Q84K35"/>
<dbReference type="OMA" id="GVHREWT"/>
<dbReference type="PhylomeDB" id="Q84K35"/>
<dbReference type="PRO" id="PR:Q84K35"/>
<dbReference type="Proteomes" id="UP000006548">
    <property type="component" value="Chromosome 1"/>
</dbReference>
<dbReference type="ExpressionAtlas" id="Q84K35">
    <property type="expression patterns" value="baseline and differential"/>
</dbReference>
<dbReference type="GO" id="GO:0005777">
    <property type="term" value="C:peroxisome"/>
    <property type="evidence" value="ECO:0000314"/>
    <property type="project" value="TAIR"/>
</dbReference>
<dbReference type="GO" id="GO:0046872">
    <property type="term" value="F:metal ion binding"/>
    <property type="evidence" value="ECO:0007669"/>
    <property type="project" value="UniProtKB-KW"/>
</dbReference>
<dbReference type="GO" id="GO:0004730">
    <property type="term" value="F:pseudouridylate synthase activity"/>
    <property type="evidence" value="ECO:0007669"/>
    <property type="project" value="InterPro"/>
</dbReference>
<dbReference type="GO" id="GO:0030597">
    <property type="term" value="F:RNA glycosylase activity"/>
    <property type="evidence" value="ECO:0000314"/>
    <property type="project" value="TAIR"/>
</dbReference>
<dbReference type="FunFam" id="3.40.1790.10:FF:000001">
    <property type="entry name" value="Indigoidine synthase A family protein"/>
    <property type="match status" value="1"/>
</dbReference>
<dbReference type="Gene3D" id="3.40.1790.10">
    <property type="entry name" value="Indigoidine synthase domain"/>
    <property type="match status" value="1"/>
</dbReference>
<dbReference type="HAMAP" id="MF_01876">
    <property type="entry name" value="PsiMP_glycosidase"/>
    <property type="match status" value="1"/>
</dbReference>
<dbReference type="InterPro" id="IPR022830">
    <property type="entry name" value="Indigdn_synthA-like"/>
</dbReference>
<dbReference type="InterPro" id="IPR007342">
    <property type="entry name" value="PsuG"/>
</dbReference>
<dbReference type="PANTHER" id="PTHR42909:SF1">
    <property type="entry name" value="CARBOHYDRATE KINASE PFKB DOMAIN-CONTAINING PROTEIN"/>
    <property type="match status" value="1"/>
</dbReference>
<dbReference type="PANTHER" id="PTHR42909">
    <property type="entry name" value="ZGC:136858"/>
    <property type="match status" value="1"/>
</dbReference>
<dbReference type="Pfam" id="PF04227">
    <property type="entry name" value="Indigoidine_A"/>
    <property type="match status" value="1"/>
</dbReference>
<dbReference type="SUPFAM" id="SSF110581">
    <property type="entry name" value="Indigoidine synthase A-like"/>
    <property type="match status" value="1"/>
</dbReference>
<name>PUMY_ARATH</name>
<reference key="1">
    <citation type="journal article" date="2000" name="Nature">
        <title>Sequence and analysis of chromosome 1 of the plant Arabidopsis thaliana.</title>
        <authorList>
            <person name="Theologis A."/>
            <person name="Ecker J.R."/>
            <person name="Palm C.J."/>
            <person name="Federspiel N.A."/>
            <person name="Kaul S."/>
            <person name="White O."/>
            <person name="Alonso J."/>
            <person name="Altafi H."/>
            <person name="Araujo R."/>
            <person name="Bowman C.L."/>
            <person name="Brooks S.Y."/>
            <person name="Buehler E."/>
            <person name="Chan A."/>
            <person name="Chao Q."/>
            <person name="Chen H."/>
            <person name="Cheuk R.F."/>
            <person name="Chin C.W."/>
            <person name="Chung M.K."/>
            <person name="Conn L."/>
            <person name="Conway A.B."/>
            <person name="Conway A.R."/>
            <person name="Creasy T.H."/>
            <person name="Dewar K."/>
            <person name="Dunn P."/>
            <person name="Etgu P."/>
            <person name="Feldblyum T.V."/>
            <person name="Feng J.-D."/>
            <person name="Fong B."/>
            <person name="Fujii C.Y."/>
            <person name="Gill J.E."/>
            <person name="Goldsmith A.D."/>
            <person name="Haas B."/>
            <person name="Hansen N.F."/>
            <person name="Hughes B."/>
            <person name="Huizar L."/>
            <person name="Hunter J.L."/>
            <person name="Jenkins J."/>
            <person name="Johnson-Hopson C."/>
            <person name="Khan S."/>
            <person name="Khaykin E."/>
            <person name="Kim C.J."/>
            <person name="Koo H.L."/>
            <person name="Kremenetskaia I."/>
            <person name="Kurtz D.B."/>
            <person name="Kwan A."/>
            <person name="Lam B."/>
            <person name="Langin-Hooper S."/>
            <person name="Lee A."/>
            <person name="Lee J.M."/>
            <person name="Lenz C.A."/>
            <person name="Li J.H."/>
            <person name="Li Y.-P."/>
            <person name="Lin X."/>
            <person name="Liu S.X."/>
            <person name="Liu Z.A."/>
            <person name="Luros J.S."/>
            <person name="Maiti R."/>
            <person name="Marziali A."/>
            <person name="Militscher J."/>
            <person name="Miranda M."/>
            <person name="Nguyen M."/>
            <person name="Nierman W.C."/>
            <person name="Osborne B.I."/>
            <person name="Pai G."/>
            <person name="Peterson J."/>
            <person name="Pham P.K."/>
            <person name="Rizzo M."/>
            <person name="Rooney T."/>
            <person name="Rowley D."/>
            <person name="Sakano H."/>
            <person name="Salzberg S.L."/>
            <person name="Schwartz J.R."/>
            <person name="Shinn P."/>
            <person name="Southwick A.M."/>
            <person name="Sun H."/>
            <person name="Tallon L.J."/>
            <person name="Tambunga G."/>
            <person name="Toriumi M.J."/>
            <person name="Town C.D."/>
            <person name="Utterback T."/>
            <person name="Van Aken S."/>
            <person name="Vaysberg M."/>
            <person name="Vysotskaia V.S."/>
            <person name="Walker M."/>
            <person name="Wu D."/>
            <person name="Yu G."/>
            <person name="Fraser C.M."/>
            <person name="Venter J.C."/>
            <person name="Davis R.W."/>
        </authorList>
    </citation>
    <scope>NUCLEOTIDE SEQUENCE [LARGE SCALE GENOMIC DNA]</scope>
    <source>
        <strain>cv. Columbia</strain>
    </source>
</reference>
<reference key="2">
    <citation type="journal article" date="2017" name="Plant J.">
        <title>Araport11: a complete reannotation of the Arabidopsis thaliana reference genome.</title>
        <authorList>
            <person name="Cheng C.Y."/>
            <person name="Krishnakumar V."/>
            <person name="Chan A.P."/>
            <person name="Thibaud-Nissen F."/>
            <person name="Schobel S."/>
            <person name="Town C.D."/>
        </authorList>
    </citation>
    <scope>GENOME REANNOTATION</scope>
    <source>
        <strain>cv. Columbia</strain>
    </source>
</reference>
<reference key="3">
    <citation type="journal article" date="2003" name="Science">
        <title>Empirical analysis of transcriptional activity in the Arabidopsis genome.</title>
        <authorList>
            <person name="Yamada K."/>
            <person name="Lim J."/>
            <person name="Dale J.M."/>
            <person name="Chen H."/>
            <person name="Shinn P."/>
            <person name="Palm C.J."/>
            <person name="Southwick A.M."/>
            <person name="Wu H.C."/>
            <person name="Kim C.J."/>
            <person name="Nguyen M."/>
            <person name="Pham P.K."/>
            <person name="Cheuk R.F."/>
            <person name="Karlin-Newmann G."/>
            <person name="Liu S.X."/>
            <person name="Lam B."/>
            <person name="Sakano H."/>
            <person name="Wu T."/>
            <person name="Yu G."/>
            <person name="Miranda M."/>
            <person name="Quach H.L."/>
            <person name="Tripp M."/>
            <person name="Chang C.H."/>
            <person name="Lee J.M."/>
            <person name="Toriumi M.J."/>
            <person name="Chan M.M."/>
            <person name="Tang C.C."/>
            <person name="Onodera C.S."/>
            <person name="Deng J.M."/>
            <person name="Akiyama K."/>
            <person name="Ansari Y."/>
            <person name="Arakawa T."/>
            <person name="Banh J."/>
            <person name="Banno F."/>
            <person name="Bowser L."/>
            <person name="Brooks S.Y."/>
            <person name="Carninci P."/>
            <person name="Chao Q."/>
            <person name="Choy N."/>
            <person name="Enju A."/>
            <person name="Goldsmith A.D."/>
            <person name="Gurjal M."/>
            <person name="Hansen N.F."/>
            <person name="Hayashizaki Y."/>
            <person name="Johnson-Hopson C."/>
            <person name="Hsuan V.W."/>
            <person name="Iida K."/>
            <person name="Karnes M."/>
            <person name="Khan S."/>
            <person name="Koesema E."/>
            <person name="Ishida J."/>
            <person name="Jiang P.X."/>
            <person name="Jones T."/>
            <person name="Kawai J."/>
            <person name="Kamiya A."/>
            <person name="Meyers C."/>
            <person name="Nakajima M."/>
            <person name="Narusaka M."/>
            <person name="Seki M."/>
            <person name="Sakurai T."/>
            <person name="Satou M."/>
            <person name="Tamse R."/>
            <person name="Vaysberg M."/>
            <person name="Wallender E.K."/>
            <person name="Wong C."/>
            <person name="Yamamura Y."/>
            <person name="Yuan S."/>
            <person name="Shinozaki K."/>
            <person name="Davis R.W."/>
            <person name="Theologis A."/>
            <person name="Ecker J.R."/>
        </authorList>
    </citation>
    <scope>NUCLEOTIDE SEQUENCE [LARGE SCALE MRNA]</scope>
    <source>
        <strain>cv. Columbia</strain>
    </source>
</reference>
<reference key="4">
    <citation type="journal article" date="2012" name="Mol. Cell. Proteomics">
        <title>Comparative large-scale characterisation of plant vs. mammal proteins reveals similar and idiosyncratic N-alpha acetylation features.</title>
        <authorList>
            <person name="Bienvenut W.V."/>
            <person name="Sumpton D."/>
            <person name="Martinez A."/>
            <person name="Lilla S."/>
            <person name="Espagne C."/>
            <person name="Meinnel T."/>
            <person name="Giglione C."/>
        </authorList>
    </citation>
    <scope>IDENTIFICATION BY MASS SPECTROMETRY [LARGE SCALE ANALYSIS]</scope>
</reference>
<reference key="5">
    <citation type="journal article" date="2020" name="Plant Cell">
        <title>A kinase and a glycosylase catabolize pseudouridine in the peroxisome to prevent toxic pseudouridine monophosphate accumulation.</title>
        <authorList>
            <person name="Chen M."/>
            <person name="Witte C.P."/>
        </authorList>
    </citation>
    <scope>FUNCTION</scope>
    <scope>CATALYTIC ACTIVITY</scope>
    <scope>BIOPHYSICOCHEMICAL PROPERTIES</scope>
    <scope>SUBCELLULAR LOCATION</scope>
</reference>
<accession>Q84K35</accession>
<accession>Q9LPS4</accession>
<gene>
    <name evidence="3" type="primary">PUMY</name>
    <name evidence="5" type="ordered locus">At1g50510</name>
    <name evidence="6" type="ORF">F11F12.14</name>
</gene>
<comment type="function">
    <text evidence="2">Catalyzes the reversible cleavage of pseudouridine 5'-phosphate (PsiMP) to ribose 5-phosphate and uracil (PubMed:31907295). Functions biologically in the cleavage direction, as part of a pseudouridine degradation pathway (PubMed:31907295). Acts together with the pseudouridine kinase PUKI in the peroxisome to prevent toxic pseudouridine monophosphate accumulation (PubMed:31907295). Can catalyze the formation of pseudouridine 5'-phosphate (reverse reaction) in vitro, with a catalytic efficiency 4 times lower than the hydrolysis reaction (PubMed:31907295).</text>
</comment>
<comment type="catalytic activity">
    <reaction evidence="2">
        <text>D-ribose 5-phosphate + uracil = psi-UMP + H2O</text>
        <dbReference type="Rhea" id="RHEA:18337"/>
        <dbReference type="ChEBI" id="CHEBI:15377"/>
        <dbReference type="ChEBI" id="CHEBI:17568"/>
        <dbReference type="ChEBI" id="CHEBI:58380"/>
        <dbReference type="ChEBI" id="CHEBI:78346"/>
        <dbReference type="EC" id="4.2.1.70"/>
    </reaction>
    <physiologicalReaction direction="right-to-left" evidence="2">
        <dbReference type="Rhea" id="RHEA:18339"/>
    </physiologicalReaction>
</comment>
<comment type="cofactor">
    <cofactor evidence="1">
        <name>Mn(2+)</name>
        <dbReference type="ChEBI" id="CHEBI:29035"/>
    </cofactor>
    <text evidence="1">Binds 1 Mn(2+) ion per subunit.</text>
</comment>
<comment type="biophysicochemical properties">
    <kinetics>
        <KM evidence="2">32.7 uM for pseudouridine 5'-phosphate</KM>
        <text evidence="2">kcat is 1.41 sec(-1) with pseudouridine 5'-phosphate as substrate.</text>
    </kinetics>
</comment>
<comment type="subunit">
    <text evidence="1">Homotrimer.</text>
</comment>
<comment type="subcellular location">
    <subcellularLocation>
        <location evidence="2">Peroxisome</location>
    </subcellularLocation>
</comment>
<comment type="similarity">
    <text evidence="4">Belongs to the pseudouridine-5'-phosphate glycosidase family.</text>
</comment>
<comment type="sequence caution" evidence="4">
    <conflict type="erroneous gene model prediction">
        <sequence resource="EMBL-CDS" id="AAF87879"/>
    </conflict>
</comment>
<keyword id="KW-0002">3D-structure</keyword>
<keyword id="KW-0326">Glycosidase</keyword>
<keyword id="KW-0378">Hydrolase</keyword>
<keyword id="KW-0456">Lyase</keyword>
<keyword id="KW-0464">Manganese</keyword>
<keyword id="KW-0479">Metal-binding</keyword>
<keyword id="KW-0576">Peroxisome</keyword>
<keyword id="KW-1185">Reference proteome</keyword>
<organism>
    <name type="scientific">Arabidopsis thaliana</name>
    <name type="common">Mouse-ear cress</name>
    <dbReference type="NCBI Taxonomy" id="3702"/>
    <lineage>
        <taxon>Eukaryota</taxon>
        <taxon>Viridiplantae</taxon>
        <taxon>Streptophyta</taxon>
        <taxon>Embryophyta</taxon>
        <taxon>Tracheophyta</taxon>
        <taxon>Spermatophyta</taxon>
        <taxon>Magnoliopsida</taxon>
        <taxon>eudicotyledons</taxon>
        <taxon>Gunneridae</taxon>
        <taxon>Pentapetalae</taxon>
        <taxon>rosids</taxon>
        <taxon>malvids</taxon>
        <taxon>Brassicales</taxon>
        <taxon>Brassicaceae</taxon>
        <taxon>Camelineae</taxon>
        <taxon>Arabidopsis</taxon>
    </lineage>
</organism>
<proteinExistence type="evidence at protein level"/>
<evidence type="ECO:0000250" key="1">
    <source>
        <dbReference type="UniProtKB" id="P33025"/>
    </source>
</evidence>
<evidence type="ECO:0000269" key="2">
    <source>
    </source>
</evidence>
<evidence type="ECO:0000303" key="3">
    <source>
    </source>
</evidence>
<evidence type="ECO:0000305" key="4"/>
<evidence type="ECO:0000312" key="5">
    <source>
        <dbReference type="Araport" id="AT1G50510"/>
    </source>
</evidence>
<evidence type="ECO:0000312" key="6">
    <source>
        <dbReference type="EMBL" id="AAF87879.1"/>
    </source>
</evidence>
<sequence length="330" mass="34800">MASSLAQSRISNLQNHLSPLEANNKLRSLVKISPQVSEALSNGRAVVALESTIISHGMPYPQNLQTAKEVESIVRENGAIPATIAILNGVPCIGLSEEELERLASLGKSVQKTAGRDIANVVATRGNGATTVSATLFFASMVGIQVFVTGGIGGVHRHANHSMDISSDLTALGRTPIAVISAGVKSILDIPKTLEYLETQEVYVAAYKSDEFPAFFTEKSGCKAPSRVNSPEDCARVIDANMKLNRQAGILFAIPIPKHHSAAGNLIESATQRALTEAREQNVTGNAETPFLLARVNELTGGTSLAANIALVKNNALIGSQIAVALSQLM</sequence>